<keyword id="KW-1185">Reference proteome</keyword>
<feature type="chain" id="PRO_1000045161" description="UPF0270 protein ESA_04379">
    <location>
        <begin position="1"/>
        <end position="72"/>
    </location>
</feature>
<comment type="similarity">
    <text evidence="1">Belongs to the UPF0270 family.</text>
</comment>
<accession>A7MKK2</accession>
<reference key="1">
    <citation type="journal article" date="2010" name="PLoS ONE">
        <title>Genome sequence of Cronobacter sakazakii BAA-894 and comparative genomic hybridization analysis with other Cronobacter species.</title>
        <authorList>
            <person name="Kucerova E."/>
            <person name="Clifton S.W."/>
            <person name="Xia X.Q."/>
            <person name="Long F."/>
            <person name="Porwollik S."/>
            <person name="Fulton L."/>
            <person name="Fronick C."/>
            <person name="Minx P."/>
            <person name="Kyung K."/>
            <person name="Warren W."/>
            <person name="Fulton R."/>
            <person name="Feng D."/>
            <person name="Wollam A."/>
            <person name="Shah N."/>
            <person name="Bhonagiri V."/>
            <person name="Nash W.E."/>
            <person name="Hallsworth-Pepin K."/>
            <person name="Wilson R.K."/>
            <person name="McClelland M."/>
            <person name="Forsythe S.J."/>
        </authorList>
    </citation>
    <scope>NUCLEOTIDE SEQUENCE [LARGE SCALE GENOMIC DNA]</scope>
    <source>
        <strain>ATCC BAA-894</strain>
    </source>
</reference>
<name>Y4379_CROS8</name>
<protein>
    <recommendedName>
        <fullName evidence="1">UPF0270 protein ESA_04379</fullName>
    </recommendedName>
</protein>
<gene>
    <name type="ordered locus">ESA_04379</name>
</gene>
<evidence type="ECO:0000255" key="1">
    <source>
        <dbReference type="HAMAP-Rule" id="MF_00690"/>
    </source>
</evidence>
<organism>
    <name type="scientific">Cronobacter sakazakii (strain ATCC BAA-894)</name>
    <name type="common">Enterobacter sakazakii</name>
    <dbReference type="NCBI Taxonomy" id="290339"/>
    <lineage>
        <taxon>Bacteria</taxon>
        <taxon>Pseudomonadati</taxon>
        <taxon>Pseudomonadota</taxon>
        <taxon>Gammaproteobacteria</taxon>
        <taxon>Enterobacterales</taxon>
        <taxon>Enterobacteriaceae</taxon>
        <taxon>Cronobacter</taxon>
    </lineage>
</organism>
<dbReference type="EMBL" id="CP000783">
    <property type="protein sequence ID" value="ABU79558.1"/>
    <property type="molecule type" value="Genomic_DNA"/>
</dbReference>
<dbReference type="RefSeq" id="WP_004386598.1">
    <property type="nucleotide sequence ID" value="NC_009778.1"/>
</dbReference>
<dbReference type="SMR" id="A7MKK2"/>
<dbReference type="KEGG" id="esa:ESA_04379"/>
<dbReference type="HOGENOM" id="CLU_186759_1_0_6"/>
<dbReference type="Proteomes" id="UP000000260">
    <property type="component" value="Chromosome"/>
</dbReference>
<dbReference type="Gene3D" id="1.10.10.610">
    <property type="entry name" value="YehU-like"/>
    <property type="match status" value="1"/>
</dbReference>
<dbReference type="HAMAP" id="MF_00690">
    <property type="entry name" value="UPF0270"/>
    <property type="match status" value="1"/>
</dbReference>
<dbReference type="InterPro" id="IPR010648">
    <property type="entry name" value="UPF0270"/>
</dbReference>
<dbReference type="InterPro" id="IPR036685">
    <property type="entry name" value="YehU-like_sf"/>
</dbReference>
<dbReference type="NCBIfam" id="NF003438">
    <property type="entry name" value="PRK04966.1"/>
    <property type="match status" value="1"/>
</dbReference>
<dbReference type="Pfam" id="PF06794">
    <property type="entry name" value="UPF0270"/>
    <property type="match status" value="1"/>
</dbReference>
<dbReference type="PIRSF" id="PIRSF006169">
    <property type="entry name" value="UCP006169"/>
    <property type="match status" value="1"/>
</dbReference>
<dbReference type="SUPFAM" id="SSF118001">
    <property type="entry name" value="YehU-like"/>
    <property type="match status" value="1"/>
</dbReference>
<sequence>MIIPWQEIAPDTLERLIEAFVLREGTDYGEHERSLEQKVADVRRQLQSGEAVLVWSELHETVNIMPRSQFRG</sequence>
<proteinExistence type="inferred from homology"/>